<evidence type="ECO:0000255" key="1">
    <source>
        <dbReference type="HAMAP-Rule" id="MF_01218"/>
    </source>
</evidence>
<organism>
    <name type="scientific">Oceanobacillus iheyensis (strain DSM 14371 / CIP 107618 / JCM 11309 / KCTC 3954 / HTE831)</name>
    <dbReference type="NCBI Taxonomy" id="221109"/>
    <lineage>
        <taxon>Bacteria</taxon>
        <taxon>Bacillati</taxon>
        <taxon>Bacillota</taxon>
        <taxon>Bacilli</taxon>
        <taxon>Bacillales</taxon>
        <taxon>Bacillaceae</taxon>
        <taxon>Oceanobacillus</taxon>
    </lineage>
</organism>
<proteinExistence type="inferred from homology"/>
<dbReference type="EC" id="2.4.2.9" evidence="1"/>
<dbReference type="EMBL" id="BA000028">
    <property type="protein sequence ID" value="BAC14940.1"/>
    <property type="molecule type" value="Genomic_DNA"/>
</dbReference>
<dbReference type="RefSeq" id="WP_011067381.1">
    <property type="nucleotide sequence ID" value="NC_004193.1"/>
</dbReference>
<dbReference type="SMR" id="Q8EM74"/>
<dbReference type="STRING" id="221109.gene:10735236"/>
<dbReference type="KEGG" id="oih:OB2984"/>
<dbReference type="eggNOG" id="COG0035">
    <property type="taxonomic scope" value="Bacteria"/>
</dbReference>
<dbReference type="HOGENOM" id="CLU_067096_2_2_9"/>
<dbReference type="OrthoDB" id="9781675at2"/>
<dbReference type="PhylomeDB" id="Q8EM74"/>
<dbReference type="UniPathway" id="UPA00574">
    <property type="reaction ID" value="UER00636"/>
</dbReference>
<dbReference type="Proteomes" id="UP000000822">
    <property type="component" value="Chromosome"/>
</dbReference>
<dbReference type="GO" id="GO:0005525">
    <property type="term" value="F:GTP binding"/>
    <property type="evidence" value="ECO:0007669"/>
    <property type="project" value="UniProtKB-KW"/>
</dbReference>
<dbReference type="GO" id="GO:0000287">
    <property type="term" value="F:magnesium ion binding"/>
    <property type="evidence" value="ECO:0007669"/>
    <property type="project" value="UniProtKB-UniRule"/>
</dbReference>
<dbReference type="GO" id="GO:0004845">
    <property type="term" value="F:uracil phosphoribosyltransferase activity"/>
    <property type="evidence" value="ECO:0007669"/>
    <property type="project" value="UniProtKB-UniRule"/>
</dbReference>
<dbReference type="GO" id="GO:0044206">
    <property type="term" value="P:UMP salvage"/>
    <property type="evidence" value="ECO:0007669"/>
    <property type="project" value="UniProtKB-UniRule"/>
</dbReference>
<dbReference type="GO" id="GO:0006223">
    <property type="term" value="P:uracil salvage"/>
    <property type="evidence" value="ECO:0007669"/>
    <property type="project" value="InterPro"/>
</dbReference>
<dbReference type="CDD" id="cd06223">
    <property type="entry name" value="PRTases_typeI"/>
    <property type="match status" value="1"/>
</dbReference>
<dbReference type="FunFam" id="3.40.50.2020:FF:000003">
    <property type="entry name" value="Uracil phosphoribosyltransferase"/>
    <property type="match status" value="1"/>
</dbReference>
<dbReference type="Gene3D" id="3.40.50.2020">
    <property type="match status" value="1"/>
</dbReference>
<dbReference type="HAMAP" id="MF_01218_B">
    <property type="entry name" value="Upp_B"/>
    <property type="match status" value="1"/>
</dbReference>
<dbReference type="InterPro" id="IPR000836">
    <property type="entry name" value="PRibTrfase_dom"/>
</dbReference>
<dbReference type="InterPro" id="IPR029057">
    <property type="entry name" value="PRTase-like"/>
</dbReference>
<dbReference type="InterPro" id="IPR034332">
    <property type="entry name" value="Upp_B"/>
</dbReference>
<dbReference type="InterPro" id="IPR050054">
    <property type="entry name" value="UPRTase/APRTase"/>
</dbReference>
<dbReference type="InterPro" id="IPR005765">
    <property type="entry name" value="Ura_phspho_trans"/>
</dbReference>
<dbReference type="NCBIfam" id="NF001097">
    <property type="entry name" value="PRK00129.1"/>
    <property type="match status" value="1"/>
</dbReference>
<dbReference type="NCBIfam" id="TIGR01091">
    <property type="entry name" value="upp"/>
    <property type="match status" value="1"/>
</dbReference>
<dbReference type="PANTHER" id="PTHR32315">
    <property type="entry name" value="ADENINE PHOSPHORIBOSYLTRANSFERASE"/>
    <property type="match status" value="1"/>
</dbReference>
<dbReference type="PANTHER" id="PTHR32315:SF4">
    <property type="entry name" value="URACIL PHOSPHORIBOSYLTRANSFERASE, CHLOROPLASTIC"/>
    <property type="match status" value="1"/>
</dbReference>
<dbReference type="Pfam" id="PF14681">
    <property type="entry name" value="UPRTase"/>
    <property type="match status" value="1"/>
</dbReference>
<dbReference type="SUPFAM" id="SSF53271">
    <property type="entry name" value="PRTase-like"/>
    <property type="match status" value="1"/>
</dbReference>
<feature type="chain" id="PRO_0000120863" description="Uracil phosphoribosyltransferase">
    <location>
        <begin position="1"/>
        <end position="209"/>
    </location>
</feature>
<feature type="binding site" evidence="1">
    <location>
        <position position="79"/>
    </location>
    <ligand>
        <name>5-phospho-alpha-D-ribose 1-diphosphate</name>
        <dbReference type="ChEBI" id="CHEBI:58017"/>
    </ligand>
</feature>
<feature type="binding site" evidence="1">
    <location>
        <position position="104"/>
    </location>
    <ligand>
        <name>5-phospho-alpha-D-ribose 1-diphosphate</name>
        <dbReference type="ChEBI" id="CHEBI:58017"/>
    </ligand>
</feature>
<feature type="binding site" evidence="1">
    <location>
        <begin position="131"/>
        <end position="139"/>
    </location>
    <ligand>
        <name>5-phospho-alpha-D-ribose 1-diphosphate</name>
        <dbReference type="ChEBI" id="CHEBI:58017"/>
    </ligand>
</feature>
<feature type="binding site" evidence="1">
    <location>
        <position position="194"/>
    </location>
    <ligand>
        <name>uracil</name>
        <dbReference type="ChEBI" id="CHEBI:17568"/>
    </ligand>
</feature>
<feature type="binding site" evidence="1">
    <location>
        <begin position="199"/>
        <end position="201"/>
    </location>
    <ligand>
        <name>uracil</name>
        <dbReference type="ChEBI" id="CHEBI:17568"/>
    </ligand>
</feature>
<feature type="binding site" evidence="1">
    <location>
        <position position="200"/>
    </location>
    <ligand>
        <name>5-phospho-alpha-D-ribose 1-diphosphate</name>
        <dbReference type="ChEBI" id="CHEBI:58017"/>
    </ligand>
</feature>
<name>UPP_OCEIH</name>
<comment type="function">
    <text evidence="1">Catalyzes the conversion of uracil and 5-phospho-alpha-D-ribose 1-diphosphate (PRPP) to UMP and diphosphate.</text>
</comment>
<comment type="catalytic activity">
    <reaction evidence="1">
        <text>UMP + diphosphate = 5-phospho-alpha-D-ribose 1-diphosphate + uracil</text>
        <dbReference type="Rhea" id="RHEA:13017"/>
        <dbReference type="ChEBI" id="CHEBI:17568"/>
        <dbReference type="ChEBI" id="CHEBI:33019"/>
        <dbReference type="ChEBI" id="CHEBI:57865"/>
        <dbReference type="ChEBI" id="CHEBI:58017"/>
        <dbReference type="EC" id="2.4.2.9"/>
    </reaction>
</comment>
<comment type="cofactor">
    <cofactor evidence="1">
        <name>Mg(2+)</name>
        <dbReference type="ChEBI" id="CHEBI:18420"/>
    </cofactor>
    <text evidence="1">Binds 1 Mg(2+) ion per subunit. The magnesium is bound as Mg-PRPP.</text>
</comment>
<comment type="activity regulation">
    <text evidence="1">Allosterically activated by GTP.</text>
</comment>
<comment type="pathway">
    <text evidence="1">Pyrimidine metabolism; UMP biosynthesis via salvage pathway; UMP from uracil: step 1/1.</text>
</comment>
<comment type="similarity">
    <text evidence="1">Belongs to the UPRTase family.</text>
</comment>
<keyword id="KW-0021">Allosteric enzyme</keyword>
<keyword id="KW-0328">Glycosyltransferase</keyword>
<keyword id="KW-0342">GTP-binding</keyword>
<keyword id="KW-0460">Magnesium</keyword>
<keyword id="KW-0547">Nucleotide-binding</keyword>
<keyword id="KW-1185">Reference proteome</keyword>
<keyword id="KW-0808">Transferase</keyword>
<protein>
    <recommendedName>
        <fullName evidence="1">Uracil phosphoribosyltransferase</fullName>
        <ecNumber evidence="1">2.4.2.9</ecNumber>
    </recommendedName>
    <alternativeName>
        <fullName evidence="1">UMP pyrophosphorylase</fullName>
    </alternativeName>
    <alternativeName>
        <fullName evidence="1">UPRTase</fullName>
    </alternativeName>
</protein>
<gene>
    <name evidence="1" type="primary">upp</name>
    <name type="ordered locus">OB2984</name>
</gene>
<sequence length="209" mass="22914">MGNVFVFDHPLIQHKLTYIRDKNTGTKEFRELVDEVAMLMAFEITRDLPVKEVNVDTPVTTAPSKVLAGKKLGLVPILRAGLGMVDGVRKLIPAAKVGHVGLYRDPETFKPVEYYVKLPNDIEEREIIVIDPMLATGGSANDAIAAIKKRGAKNIRLMCLIAAPEGVEVVKEAHPDVDIYLAAMDERLDDHGYIIPGLGDAGDRLFGTK</sequence>
<accession>Q8EM74</accession>
<reference key="1">
    <citation type="journal article" date="2002" name="Nucleic Acids Res.">
        <title>Genome sequence of Oceanobacillus iheyensis isolated from the Iheya Ridge and its unexpected adaptive capabilities to extreme environments.</title>
        <authorList>
            <person name="Takami H."/>
            <person name="Takaki Y."/>
            <person name="Uchiyama I."/>
        </authorList>
    </citation>
    <scope>NUCLEOTIDE SEQUENCE [LARGE SCALE GENOMIC DNA]</scope>
    <source>
        <strain>DSM 14371 / CIP 107618 / JCM 11309 / KCTC 3954 / HTE831</strain>
    </source>
</reference>